<sequence length="284" mass="30937">MYVVSTKQMLNNARRGGYAVPAFNIHNLETMQVVVETAASMHAPVIIAGTPGTFTHAGTENLMALVSAMAKQYHHPLAIHLDHHTKFDDIAQKVRSGVRSVMIDASHLPFAQNISRVKEVVDFCHRFDVSVEAELGQLGGQEDDVQVNEADAFYTNPVQAREFAEATGIDSLAVAIGTAHGMYASAPALDFSRLENIRQWVNLPLVLHGASGLSTKDIQQTIKLGICKINVATELKNAFSQALKNYLTEYPEATDPRDYLQSAKSAMRDVVSKVIADCGCEGRA</sequence>
<accession>B7MEF1</accession>
<evidence type="ECO:0000255" key="1">
    <source>
        <dbReference type="HAMAP-Rule" id="MF_01294"/>
    </source>
</evidence>
<proteinExistence type="inferred from homology"/>
<protein>
    <recommendedName>
        <fullName evidence="1">D-tagatose-1,6-bisphosphate aldolase subunit GatY</fullName>
        <shortName evidence="1">TBPA</shortName>
        <shortName evidence="1">TagBP aldolase</shortName>
        <ecNumber evidence="1">4.1.2.40</ecNumber>
    </recommendedName>
    <alternativeName>
        <fullName evidence="1">D-tagatose-bisphosphate aldolase class II</fullName>
    </alternativeName>
    <alternativeName>
        <fullName evidence="1">Tagatose-bisphosphate aldolase</fullName>
    </alternativeName>
</protein>
<gene>
    <name evidence="1" type="primary">gatY</name>
    <name type="ordered locus">ECS88_2238</name>
</gene>
<reference key="1">
    <citation type="journal article" date="2009" name="PLoS Genet.">
        <title>Organised genome dynamics in the Escherichia coli species results in highly diverse adaptive paths.</title>
        <authorList>
            <person name="Touchon M."/>
            <person name="Hoede C."/>
            <person name="Tenaillon O."/>
            <person name="Barbe V."/>
            <person name="Baeriswyl S."/>
            <person name="Bidet P."/>
            <person name="Bingen E."/>
            <person name="Bonacorsi S."/>
            <person name="Bouchier C."/>
            <person name="Bouvet O."/>
            <person name="Calteau A."/>
            <person name="Chiapello H."/>
            <person name="Clermont O."/>
            <person name="Cruveiller S."/>
            <person name="Danchin A."/>
            <person name="Diard M."/>
            <person name="Dossat C."/>
            <person name="Karoui M.E."/>
            <person name="Frapy E."/>
            <person name="Garry L."/>
            <person name="Ghigo J.M."/>
            <person name="Gilles A.M."/>
            <person name="Johnson J."/>
            <person name="Le Bouguenec C."/>
            <person name="Lescat M."/>
            <person name="Mangenot S."/>
            <person name="Martinez-Jehanne V."/>
            <person name="Matic I."/>
            <person name="Nassif X."/>
            <person name="Oztas S."/>
            <person name="Petit M.A."/>
            <person name="Pichon C."/>
            <person name="Rouy Z."/>
            <person name="Ruf C.S."/>
            <person name="Schneider D."/>
            <person name="Tourret J."/>
            <person name="Vacherie B."/>
            <person name="Vallenet D."/>
            <person name="Medigue C."/>
            <person name="Rocha E.P.C."/>
            <person name="Denamur E."/>
        </authorList>
    </citation>
    <scope>NUCLEOTIDE SEQUENCE [LARGE SCALE GENOMIC DNA]</scope>
    <source>
        <strain>S88 / ExPEC</strain>
    </source>
</reference>
<keyword id="KW-0298">Galactitol metabolism</keyword>
<keyword id="KW-0456">Lyase</keyword>
<keyword id="KW-0479">Metal-binding</keyword>
<keyword id="KW-1185">Reference proteome</keyword>
<keyword id="KW-0862">Zinc</keyword>
<comment type="function">
    <text evidence="1">Catalytic subunit of the tagatose-1,6-bisphosphate aldolase GatYZ, which catalyzes the reversible aldol condensation of dihydroxyacetone phosphate (DHAP or glycerone-phosphate) with glyceraldehyde 3-phosphate (G3P) to produce tagatose 1,6-bisphosphate (TBP). Requires GatZ subunit for full activity and stability. Is involved in the catabolism of galactitol.</text>
</comment>
<comment type="catalytic activity">
    <reaction evidence="1">
        <text>D-tagatofuranose 1,6-bisphosphate = D-glyceraldehyde 3-phosphate + dihydroxyacetone phosphate</text>
        <dbReference type="Rhea" id="RHEA:22948"/>
        <dbReference type="ChEBI" id="CHEBI:57642"/>
        <dbReference type="ChEBI" id="CHEBI:58694"/>
        <dbReference type="ChEBI" id="CHEBI:59776"/>
        <dbReference type="EC" id="4.1.2.40"/>
    </reaction>
</comment>
<comment type="cofactor">
    <cofactor evidence="1">
        <name>Zn(2+)</name>
        <dbReference type="ChEBI" id="CHEBI:29105"/>
    </cofactor>
    <text evidence="1">Binds 1 zinc ion per subunit.</text>
</comment>
<comment type="pathway">
    <text evidence="1">Carbohydrate metabolism; D-tagatose 6-phosphate degradation; D-glyceraldehyde 3-phosphate and glycerone phosphate from D-tagatose 6-phosphate: step 2/2.</text>
</comment>
<comment type="subunit">
    <text evidence="1">Forms a complex with GatZ.</text>
</comment>
<comment type="similarity">
    <text evidence="1">Belongs to the class II fructose-bisphosphate aldolase family. TagBP aldolase GatY subfamily.</text>
</comment>
<organism>
    <name type="scientific">Escherichia coli O45:K1 (strain S88 / ExPEC)</name>
    <dbReference type="NCBI Taxonomy" id="585035"/>
    <lineage>
        <taxon>Bacteria</taxon>
        <taxon>Pseudomonadati</taxon>
        <taxon>Pseudomonadota</taxon>
        <taxon>Gammaproteobacteria</taxon>
        <taxon>Enterobacterales</taxon>
        <taxon>Enterobacteriaceae</taxon>
        <taxon>Escherichia</taxon>
    </lineage>
</organism>
<dbReference type="EC" id="4.1.2.40" evidence="1"/>
<dbReference type="EMBL" id="CU928161">
    <property type="protein sequence ID" value="CAR03524.1"/>
    <property type="molecule type" value="Genomic_DNA"/>
</dbReference>
<dbReference type="RefSeq" id="WP_000289810.1">
    <property type="nucleotide sequence ID" value="NC_011742.1"/>
</dbReference>
<dbReference type="SMR" id="B7MEF1"/>
<dbReference type="KEGG" id="ecz:ECS88_2238"/>
<dbReference type="HOGENOM" id="CLU_040088_0_1_6"/>
<dbReference type="UniPathway" id="UPA00704">
    <property type="reaction ID" value="UER00716"/>
</dbReference>
<dbReference type="Proteomes" id="UP000000747">
    <property type="component" value="Chromosome"/>
</dbReference>
<dbReference type="GO" id="GO:0005829">
    <property type="term" value="C:cytosol"/>
    <property type="evidence" value="ECO:0007669"/>
    <property type="project" value="TreeGrafter"/>
</dbReference>
<dbReference type="GO" id="GO:0009025">
    <property type="term" value="F:tagatose-bisphosphate aldolase activity"/>
    <property type="evidence" value="ECO:0007669"/>
    <property type="project" value="UniProtKB-UniRule"/>
</dbReference>
<dbReference type="GO" id="GO:0008270">
    <property type="term" value="F:zinc ion binding"/>
    <property type="evidence" value="ECO:0007669"/>
    <property type="project" value="UniProtKB-UniRule"/>
</dbReference>
<dbReference type="GO" id="GO:2001059">
    <property type="term" value="P:D-tagatose 6-phosphate catabolic process"/>
    <property type="evidence" value="ECO:0007669"/>
    <property type="project" value="UniProtKB-UniRule"/>
</dbReference>
<dbReference type="GO" id="GO:0019404">
    <property type="term" value="P:galactitol catabolic process"/>
    <property type="evidence" value="ECO:0007669"/>
    <property type="project" value="InterPro"/>
</dbReference>
<dbReference type="CDD" id="cd00947">
    <property type="entry name" value="TBP_aldolase_IIB"/>
    <property type="match status" value="1"/>
</dbReference>
<dbReference type="FunFam" id="3.20.20.70:FF:000043">
    <property type="entry name" value="D-tagatose-1,6-bisphosphate aldolase subunit GatY"/>
    <property type="match status" value="1"/>
</dbReference>
<dbReference type="Gene3D" id="3.20.20.70">
    <property type="entry name" value="Aldolase class I"/>
    <property type="match status" value="1"/>
</dbReference>
<dbReference type="HAMAP" id="MF_01294">
    <property type="entry name" value="TagBP_aldolase_GatY"/>
    <property type="match status" value="1"/>
</dbReference>
<dbReference type="InterPro" id="IPR013785">
    <property type="entry name" value="Aldolase_TIM"/>
</dbReference>
<dbReference type="InterPro" id="IPR050246">
    <property type="entry name" value="Class_II_FBP_aldolase"/>
</dbReference>
<dbReference type="InterPro" id="IPR000771">
    <property type="entry name" value="FBA_II"/>
</dbReference>
<dbReference type="InterPro" id="IPR011288">
    <property type="entry name" value="TagBP_ald_KbaY/GatY"/>
</dbReference>
<dbReference type="InterPro" id="IPR023955">
    <property type="entry name" value="TagBP_aldolase_GatY"/>
</dbReference>
<dbReference type="NCBIfam" id="TIGR00167">
    <property type="entry name" value="cbbA"/>
    <property type="match status" value="1"/>
</dbReference>
<dbReference type="NCBIfam" id="NF006626">
    <property type="entry name" value="PRK09195.1"/>
    <property type="match status" value="1"/>
</dbReference>
<dbReference type="NCBIfam" id="NF009374">
    <property type="entry name" value="PRK12737.1"/>
    <property type="match status" value="1"/>
</dbReference>
<dbReference type="NCBIfam" id="TIGR01858">
    <property type="entry name" value="tag_bisphos_ald"/>
    <property type="match status" value="1"/>
</dbReference>
<dbReference type="PANTHER" id="PTHR30304">
    <property type="entry name" value="D-TAGATOSE-1,6-BISPHOSPHATE ALDOLASE"/>
    <property type="match status" value="1"/>
</dbReference>
<dbReference type="PANTHER" id="PTHR30304:SF0">
    <property type="entry name" value="D-TAGATOSE-1,6-BISPHOSPHATE ALDOLASE SUBUNIT GATY-RELATED"/>
    <property type="match status" value="1"/>
</dbReference>
<dbReference type="Pfam" id="PF01116">
    <property type="entry name" value="F_bP_aldolase"/>
    <property type="match status" value="1"/>
</dbReference>
<dbReference type="PIRSF" id="PIRSF001359">
    <property type="entry name" value="F_bP_aldolase_II"/>
    <property type="match status" value="1"/>
</dbReference>
<dbReference type="SUPFAM" id="SSF51569">
    <property type="entry name" value="Aldolase"/>
    <property type="match status" value="1"/>
</dbReference>
<dbReference type="PROSITE" id="PS00602">
    <property type="entry name" value="ALDOLASE_CLASS_II_1"/>
    <property type="match status" value="1"/>
</dbReference>
<dbReference type="PROSITE" id="PS00806">
    <property type="entry name" value="ALDOLASE_CLASS_II_2"/>
    <property type="match status" value="1"/>
</dbReference>
<feature type="chain" id="PRO_1000140435" description="D-tagatose-1,6-bisphosphate aldolase subunit GatY">
    <location>
        <begin position="1"/>
        <end position="284"/>
    </location>
</feature>
<feature type="active site" description="Proton donor" evidence="1">
    <location>
        <position position="82"/>
    </location>
</feature>
<feature type="binding site" evidence="1">
    <location>
        <position position="83"/>
    </location>
    <ligand>
        <name>Zn(2+)</name>
        <dbReference type="ChEBI" id="CHEBI:29105"/>
        <note>catalytic</note>
    </ligand>
</feature>
<feature type="binding site" evidence="1">
    <location>
        <position position="180"/>
    </location>
    <ligand>
        <name>Zn(2+)</name>
        <dbReference type="ChEBI" id="CHEBI:29105"/>
        <note>catalytic</note>
    </ligand>
</feature>
<feature type="binding site" evidence="1">
    <location>
        <position position="181"/>
    </location>
    <ligand>
        <name>dihydroxyacetone phosphate</name>
        <dbReference type="ChEBI" id="CHEBI:57642"/>
    </ligand>
</feature>
<feature type="binding site" evidence="1">
    <location>
        <position position="208"/>
    </location>
    <ligand>
        <name>Zn(2+)</name>
        <dbReference type="ChEBI" id="CHEBI:29105"/>
        <note>catalytic</note>
    </ligand>
</feature>
<feature type="binding site" evidence="1">
    <location>
        <begin position="209"/>
        <end position="211"/>
    </location>
    <ligand>
        <name>dihydroxyacetone phosphate</name>
        <dbReference type="ChEBI" id="CHEBI:57642"/>
    </ligand>
</feature>
<feature type="binding site" evidence="1">
    <location>
        <begin position="230"/>
        <end position="233"/>
    </location>
    <ligand>
        <name>dihydroxyacetone phosphate</name>
        <dbReference type="ChEBI" id="CHEBI:57642"/>
    </ligand>
</feature>
<name>GATY_ECO45</name>